<protein>
    <recommendedName>
        <fullName evidence="1">Arginine repressor</fullName>
    </recommendedName>
</protein>
<dbReference type="EMBL" id="CP000232">
    <property type="protein sequence ID" value="ABC19817.1"/>
    <property type="molecule type" value="Genomic_DNA"/>
</dbReference>
<dbReference type="RefSeq" id="YP_430360.1">
    <property type="nucleotide sequence ID" value="NC_007644.1"/>
</dbReference>
<dbReference type="SMR" id="Q2RIC2"/>
<dbReference type="STRING" id="264732.Moth_1508"/>
<dbReference type="EnsemblBacteria" id="ABC19817">
    <property type="protein sequence ID" value="ABC19817"/>
    <property type="gene ID" value="Moth_1508"/>
</dbReference>
<dbReference type="KEGG" id="mta:Moth_1508"/>
<dbReference type="PATRIC" id="fig|264732.11.peg.1634"/>
<dbReference type="eggNOG" id="COG1438">
    <property type="taxonomic scope" value="Bacteria"/>
</dbReference>
<dbReference type="HOGENOM" id="CLU_097103_3_0_9"/>
<dbReference type="OrthoDB" id="9807089at2"/>
<dbReference type="UniPathway" id="UPA00068"/>
<dbReference type="GO" id="GO:0005737">
    <property type="term" value="C:cytoplasm"/>
    <property type="evidence" value="ECO:0007669"/>
    <property type="project" value="UniProtKB-SubCell"/>
</dbReference>
<dbReference type="GO" id="GO:0034618">
    <property type="term" value="F:arginine binding"/>
    <property type="evidence" value="ECO:0007669"/>
    <property type="project" value="InterPro"/>
</dbReference>
<dbReference type="GO" id="GO:0003677">
    <property type="term" value="F:DNA binding"/>
    <property type="evidence" value="ECO:0007669"/>
    <property type="project" value="UniProtKB-KW"/>
</dbReference>
<dbReference type="GO" id="GO:0003700">
    <property type="term" value="F:DNA-binding transcription factor activity"/>
    <property type="evidence" value="ECO:0007669"/>
    <property type="project" value="UniProtKB-UniRule"/>
</dbReference>
<dbReference type="GO" id="GO:0006526">
    <property type="term" value="P:L-arginine biosynthetic process"/>
    <property type="evidence" value="ECO:0007669"/>
    <property type="project" value="UniProtKB-UniPathway"/>
</dbReference>
<dbReference type="GO" id="GO:0051259">
    <property type="term" value="P:protein complex oligomerization"/>
    <property type="evidence" value="ECO:0007669"/>
    <property type="project" value="InterPro"/>
</dbReference>
<dbReference type="GO" id="GO:1900079">
    <property type="term" value="P:regulation of arginine biosynthetic process"/>
    <property type="evidence" value="ECO:0007669"/>
    <property type="project" value="UniProtKB-UniRule"/>
</dbReference>
<dbReference type="Gene3D" id="3.30.1360.40">
    <property type="match status" value="1"/>
</dbReference>
<dbReference type="Gene3D" id="1.10.10.10">
    <property type="entry name" value="Winged helix-like DNA-binding domain superfamily/Winged helix DNA-binding domain"/>
    <property type="match status" value="1"/>
</dbReference>
<dbReference type="HAMAP" id="MF_00173">
    <property type="entry name" value="Arg_repressor"/>
    <property type="match status" value="1"/>
</dbReference>
<dbReference type="InterPro" id="IPR001669">
    <property type="entry name" value="Arg_repress"/>
</dbReference>
<dbReference type="InterPro" id="IPR020899">
    <property type="entry name" value="Arg_repress_C"/>
</dbReference>
<dbReference type="InterPro" id="IPR036251">
    <property type="entry name" value="Arg_repress_C_sf"/>
</dbReference>
<dbReference type="InterPro" id="IPR020900">
    <property type="entry name" value="Arg_repress_DNA-bd"/>
</dbReference>
<dbReference type="InterPro" id="IPR036388">
    <property type="entry name" value="WH-like_DNA-bd_sf"/>
</dbReference>
<dbReference type="InterPro" id="IPR036390">
    <property type="entry name" value="WH_DNA-bd_sf"/>
</dbReference>
<dbReference type="NCBIfam" id="TIGR01529">
    <property type="entry name" value="argR_whole"/>
    <property type="match status" value="1"/>
</dbReference>
<dbReference type="PANTHER" id="PTHR34471">
    <property type="entry name" value="ARGININE REPRESSOR"/>
    <property type="match status" value="1"/>
</dbReference>
<dbReference type="PANTHER" id="PTHR34471:SF1">
    <property type="entry name" value="ARGININE REPRESSOR"/>
    <property type="match status" value="1"/>
</dbReference>
<dbReference type="Pfam" id="PF01316">
    <property type="entry name" value="Arg_repressor"/>
    <property type="match status" value="1"/>
</dbReference>
<dbReference type="Pfam" id="PF02863">
    <property type="entry name" value="Arg_repressor_C"/>
    <property type="match status" value="1"/>
</dbReference>
<dbReference type="PRINTS" id="PR01467">
    <property type="entry name" value="ARGREPRESSOR"/>
</dbReference>
<dbReference type="SUPFAM" id="SSF55252">
    <property type="entry name" value="C-terminal domain of arginine repressor"/>
    <property type="match status" value="1"/>
</dbReference>
<dbReference type="SUPFAM" id="SSF46785">
    <property type="entry name" value="Winged helix' DNA-binding domain"/>
    <property type="match status" value="1"/>
</dbReference>
<comment type="function">
    <text evidence="1">Regulates arginine biosynthesis genes.</text>
</comment>
<comment type="pathway">
    <text>Amino-acid biosynthesis; L-arginine biosynthesis [regulation].</text>
</comment>
<comment type="subcellular location">
    <subcellularLocation>
        <location evidence="1">Cytoplasm</location>
    </subcellularLocation>
</comment>
<comment type="similarity">
    <text evidence="1">Belongs to the ArgR family.</text>
</comment>
<organism>
    <name type="scientific">Moorella thermoacetica (strain ATCC 39073 / JCM 9320)</name>
    <dbReference type="NCBI Taxonomy" id="264732"/>
    <lineage>
        <taxon>Bacteria</taxon>
        <taxon>Bacillati</taxon>
        <taxon>Bacillota</taxon>
        <taxon>Clostridia</taxon>
        <taxon>Moorellales</taxon>
        <taxon>Moorellaceae</taxon>
        <taxon>Moorella</taxon>
    </lineage>
</organism>
<keyword id="KW-0028">Amino-acid biosynthesis</keyword>
<keyword id="KW-0055">Arginine biosynthesis</keyword>
<keyword id="KW-0963">Cytoplasm</keyword>
<keyword id="KW-0238">DNA-binding</keyword>
<keyword id="KW-0678">Repressor</keyword>
<keyword id="KW-0804">Transcription</keyword>
<keyword id="KW-0805">Transcription regulation</keyword>
<sequence>MKTQRQQLILKLIASTPIATQDQLARELRRRGLRVTQATVSRDIKELGLIKVPAGENLYRYAAPPGQRLINPYGRLQRLFADSVTKIDDSENLILIRTLPGTAHAVASCLDSLDWPEVIGTVAGDDTILVIVKPKEAVATVLQRFRELGEG</sequence>
<name>ARGR_MOOTA</name>
<reference key="1">
    <citation type="journal article" date="2008" name="Environ. Microbiol.">
        <title>The complete genome sequence of Moorella thermoacetica (f. Clostridium thermoaceticum).</title>
        <authorList>
            <person name="Pierce E."/>
            <person name="Xie G."/>
            <person name="Barabote R.D."/>
            <person name="Saunders E."/>
            <person name="Han C.S."/>
            <person name="Detter J.C."/>
            <person name="Richardson P."/>
            <person name="Brettin T.S."/>
            <person name="Das A."/>
            <person name="Ljungdahl L.G."/>
            <person name="Ragsdale S.W."/>
        </authorList>
    </citation>
    <scope>NUCLEOTIDE SEQUENCE [LARGE SCALE GENOMIC DNA]</scope>
    <source>
        <strain>ATCC 39073 / JCM 9320</strain>
    </source>
</reference>
<accession>Q2RIC2</accession>
<proteinExistence type="inferred from homology"/>
<gene>
    <name evidence="1" type="primary">argR</name>
    <name type="ordered locus">Moth_1508</name>
</gene>
<evidence type="ECO:0000255" key="1">
    <source>
        <dbReference type="HAMAP-Rule" id="MF_00173"/>
    </source>
</evidence>
<feature type="chain" id="PRO_1000023578" description="Arginine repressor">
    <location>
        <begin position="1"/>
        <end position="151"/>
    </location>
</feature>